<proteinExistence type="inferred from homology"/>
<evidence type="ECO:0000255" key="1">
    <source>
        <dbReference type="HAMAP-Rule" id="MF_01719"/>
    </source>
</evidence>
<comment type="function">
    <text evidence="1">Part of the ABC transporter complex MetNIQ involved in methionine import. Responsible for energy coupling to the transport system.</text>
</comment>
<comment type="catalytic activity">
    <reaction evidence="1">
        <text>L-methionine(out) + ATP + H2O = L-methionine(in) + ADP + phosphate + H(+)</text>
        <dbReference type="Rhea" id="RHEA:29779"/>
        <dbReference type="ChEBI" id="CHEBI:15377"/>
        <dbReference type="ChEBI" id="CHEBI:15378"/>
        <dbReference type="ChEBI" id="CHEBI:30616"/>
        <dbReference type="ChEBI" id="CHEBI:43474"/>
        <dbReference type="ChEBI" id="CHEBI:57844"/>
        <dbReference type="ChEBI" id="CHEBI:456216"/>
        <dbReference type="EC" id="7.4.2.11"/>
    </reaction>
</comment>
<comment type="catalytic activity">
    <reaction evidence="1">
        <text>D-methionine(out) + ATP + H2O = D-methionine(in) + ADP + phosphate + H(+)</text>
        <dbReference type="Rhea" id="RHEA:29767"/>
        <dbReference type="ChEBI" id="CHEBI:15377"/>
        <dbReference type="ChEBI" id="CHEBI:15378"/>
        <dbReference type="ChEBI" id="CHEBI:30616"/>
        <dbReference type="ChEBI" id="CHEBI:43474"/>
        <dbReference type="ChEBI" id="CHEBI:57932"/>
        <dbReference type="ChEBI" id="CHEBI:456216"/>
        <dbReference type="EC" id="7.4.2.11"/>
    </reaction>
</comment>
<comment type="subunit">
    <text evidence="1">The complex is composed of two ATP-binding proteins (MetN), two transmembrane proteins (MetI) and a solute-binding protein (MetQ).</text>
</comment>
<comment type="subcellular location">
    <subcellularLocation>
        <location evidence="1">Cell inner membrane</location>
        <topology evidence="1">Peripheral membrane protein</topology>
    </subcellularLocation>
</comment>
<comment type="similarity">
    <text evidence="1">Belongs to the ABC transporter superfamily. Methionine importer (TC 3.A.1.24) family.</text>
</comment>
<reference key="1">
    <citation type="journal article" date="1999" name="Nature">
        <title>Genomic sequence comparison of two unrelated isolates of the human gastric pathogen Helicobacter pylori.</title>
        <authorList>
            <person name="Alm R.A."/>
            <person name="Ling L.-S.L."/>
            <person name="Moir D.T."/>
            <person name="King B.L."/>
            <person name="Brown E.D."/>
            <person name="Doig P.C."/>
            <person name="Smith D.R."/>
            <person name="Noonan B."/>
            <person name="Guild B.C."/>
            <person name="deJonge B.L."/>
            <person name="Carmel G."/>
            <person name="Tummino P.J."/>
            <person name="Caruso A."/>
            <person name="Uria-Nickelsen M."/>
            <person name="Mills D.M."/>
            <person name="Ives C."/>
            <person name="Gibson R."/>
            <person name="Merberg D."/>
            <person name="Mills S.D."/>
            <person name="Jiang Q."/>
            <person name="Taylor D.E."/>
            <person name="Vovis G.F."/>
            <person name="Trust T.J."/>
        </authorList>
    </citation>
    <scope>NUCLEOTIDE SEQUENCE [LARGE SCALE GENOMIC DNA]</scope>
    <source>
        <strain>J99 / ATCC 700824</strain>
    </source>
</reference>
<feature type="chain" id="PRO_0000270312" description="Methionine import ATP-binding protein MetN">
    <location>
        <begin position="1"/>
        <end position="327"/>
    </location>
</feature>
<feature type="domain" description="ABC transporter" evidence="1">
    <location>
        <begin position="3"/>
        <end position="239"/>
    </location>
</feature>
<feature type="binding site" evidence="1">
    <location>
        <begin position="36"/>
        <end position="43"/>
    </location>
    <ligand>
        <name>ATP</name>
        <dbReference type="ChEBI" id="CHEBI:30616"/>
    </ligand>
</feature>
<sequence>MVVELKNIEKIYENGFHALKGVNLELKKGDILGVIGYSGAGKSTLIRLINCLERPSSGEVLVNGVNLLNLKPKELQKARQKIGMIFQHFNLLSAKNVFENVAFALEIARWEKTKIKSRVHELLELVGLEDKVHFYPKQLSGGQKQRVAIARSLANCPNLLLCDEATSALDSKTTHSILTLLSGIQKKFDLSIVFITHQIEVVKELCNQMCVISSGEIVERGSVEEIFANPKHAVTKELLGIKNEHADQKSQDIYRIVFLGEHLDEPIISNLIRRFKIDVSIISGNIEELTTKDIGYLVVRFLGSVAEIQRALEYLNALGLQVEKLKD</sequence>
<gene>
    <name evidence="1" type="primary">metN</name>
    <name type="ordered locus">jhp_1484</name>
</gene>
<dbReference type="EC" id="7.4.2.11" evidence="1"/>
<dbReference type="EMBL" id="AE001439">
    <property type="protein sequence ID" value="AAD07069.1"/>
    <property type="molecule type" value="Genomic_DNA"/>
</dbReference>
<dbReference type="PIR" id="F71800">
    <property type="entry name" value="F71800"/>
</dbReference>
<dbReference type="RefSeq" id="WP_000259823.1">
    <property type="nucleotide sequence ID" value="NC_000921.1"/>
</dbReference>
<dbReference type="SMR" id="Q9ZJ34"/>
<dbReference type="KEGG" id="hpj:jhp_1484"/>
<dbReference type="PATRIC" id="fig|85963.30.peg.1057"/>
<dbReference type="eggNOG" id="COG1135">
    <property type="taxonomic scope" value="Bacteria"/>
</dbReference>
<dbReference type="Proteomes" id="UP000000804">
    <property type="component" value="Chromosome"/>
</dbReference>
<dbReference type="GO" id="GO:0005886">
    <property type="term" value="C:plasma membrane"/>
    <property type="evidence" value="ECO:0007669"/>
    <property type="project" value="UniProtKB-SubCell"/>
</dbReference>
<dbReference type="GO" id="GO:0033232">
    <property type="term" value="F:ABC-type D-methionine transporter activity"/>
    <property type="evidence" value="ECO:0007669"/>
    <property type="project" value="UniProtKB-EC"/>
</dbReference>
<dbReference type="GO" id="GO:0005524">
    <property type="term" value="F:ATP binding"/>
    <property type="evidence" value="ECO:0007669"/>
    <property type="project" value="UniProtKB-KW"/>
</dbReference>
<dbReference type="GO" id="GO:0016887">
    <property type="term" value="F:ATP hydrolysis activity"/>
    <property type="evidence" value="ECO:0007669"/>
    <property type="project" value="InterPro"/>
</dbReference>
<dbReference type="CDD" id="cd03258">
    <property type="entry name" value="ABC_MetN_methionine_transporter"/>
    <property type="match status" value="1"/>
</dbReference>
<dbReference type="FunFam" id="3.40.50.300:FF:000056">
    <property type="entry name" value="Cell division ATP-binding protein FtsE"/>
    <property type="match status" value="1"/>
</dbReference>
<dbReference type="Gene3D" id="3.30.70.260">
    <property type="match status" value="1"/>
</dbReference>
<dbReference type="Gene3D" id="3.40.50.300">
    <property type="entry name" value="P-loop containing nucleotide triphosphate hydrolases"/>
    <property type="match status" value="1"/>
</dbReference>
<dbReference type="InterPro" id="IPR003593">
    <property type="entry name" value="AAA+_ATPase"/>
</dbReference>
<dbReference type="InterPro" id="IPR003439">
    <property type="entry name" value="ABC_transporter-like_ATP-bd"/>
</dbReference>
<dbReference type="InterPro" id="IPR017871">
    <property type="entry name" value="ABC_transporter-like_CS"/>
</dbReference>
<dbReference type="InterPro" id="IPR045865">
    <property type="entry name" value="ACT-like_dom_sf"/>
</dbReference>
<dbReference type="InterPro" id="IPR041701">
    <property type="entry name" value="MetN_ABC"/>
</dbReference>
<dbReference type="InterPro" id="IPR050086">
    <property type="entry name" value="MetN_ABC_transporter-like"/>
</dbReference>
<dbReference type="InterPro" id="IPR018449">
    <property type="entry name" value="NIL_domain"/>
</dbReference>
<dbReference type="InterPro" id="IPR027417">
    <property type="entry name" value="P-loop_NTPase"/>
</dbReference>
<dbReference type="PANTHER" id="PTHR43166">
    <property type="entry name" value="AMINO ACID IMPORT ATP-BINDING PROTEIN"/>
    <property type="match status" value="1"/>
</dbReference>
<dbReference type="PANTHER" id="PTHR43166:SF30">
    <property type="entry name" value="METHIONINE IMPORT ATP-BINDING PROTEIN METN"/>
    <property type="match status" value="1"/>
</dbReference>
<dbReference type="Pfam" id="PF00005">
    <property type="entry name" value="ABC_tran"/>
    <property type="match status" value="1"/>
</dbReference>
<dbReference type="Pfam" id="PF09383">
    <property type="entry name" value="NIL"/>
    <property type="match status" value="1"/>
</dbReference>
<dbReference type="SMART" id="SM00382">
    <property type="entry name" value="AAA"/>
    <property type="match status" value="1"/>
</dbReference>
<dbReference type="SMART" id="SM00930">
    <property type="entry name" value="NIL"/>
    <property type="match status" value="1"/>
</dbReference>
<dbReference type="SUPFAM" id="SSF55021">
    <property type="entry name" value="ACT-like"/>
    <property type="match status" value="1"/>
</dbReference>
<dbReference type="SUPFAM" id="SSF52540">
    <property type="entry name" value="P-loop containing nucleoside triphosphate hydrolases"/>
    <property type="match status" value="1"/>
</dbReference>
<dbReference type="PROSITE" id="PS00211">
    <property type="entry name" value="ABC_TRANSPORTER_1"/>
    <property type="match status" value="1"/>
</dbReference>
<dbReference type="PROSITE" id="PS50893">
    <property type="entry name" value="ABC_TRANSPORTER_2"/>
    <property type="match status" value="1"/>
</dbReference>
<dbReference type="PROSITE" id="PS51264">
    <property type="entry name" value="METN"/>
    <property type="match status" value="1"/>
</dbReference>
<name>METN_HELPJ</name>
<accession>Q9ZJ34</accession>
<protein>
    <recommendedName>
        <fullName evidence="1">Methionine import ATP-binding protein MetN</fullName>
        <ecNumber evidence="1">7.4.2.11</ecNumber>
    </recommendedName>
</protein>
<keyword id="KW-0029">Amino-acid transport</keyword>
<keyword id="KW-0067">ATP-binding</keyword>
<keyword id="KW-0997">Cell inner membrane</keyword>
<keyword id="KW-1003">Cell membrane</keyword>
<keyword id="KW-0472">Membrane</keyword>
<keyword id="KW-0547">Nucleotide-binding</keyword>
<keyword id="KW-1278">Translocase</keyword>
<keyword id="KW-0813">Transport</keyword>
<organism>
    <name type="scientific">Helicobacter pylori (strain J99 / ATCC 700824)</name>
    <name type="common">Campylobacter pylori J99</name>
    <dbReference type="NCBI Taxonomy" id="85963"/>
    <lineage>
        <taxon>Bacteria</taxon>
        <taxon>Pseudomonadati</taxon>
        <taxon>Campylobacterota</taxon>
        <taxon>Epsilonproteobacteria</taxon>
        <taxon>Campylobacterales</taxon>
        <taxon>Helicobacteraceae</taxon>
        <taxon>Helicobacter</taxon>
    </lineage>
</organism>